<feature type="chain" id="PRO_1000056566" description="Trans-aconitate 2-methyltransferase">
    <location>
        <begin position="1"/>
        <end position="263"/>
    </location>
</feature>
<accession>A0PN72</accession>
<evidence type="ECO:0000255" key="1">
    <source>
        <dbReference type="HAMAP-Rule" id="MF_00560"/>
    </source>
</evidence>
<gene>
    <name evidence="1" type="primary">tam</name>
    <name type="ordered locus">MUL_1216</name>
</gene>
<sequence length="263" mass="29341">MWDPAVYLAFADHRGRPFYDLVSRIGAKRARRVVDLGCGPGNLTRYLARRWPEAIIEAWDSSPQMVAAARERGIDATTGDLRTWKPKPDTDVVISSAALHWVPEHADLMVQWATVLPHGSWIAVQVPGNFETPSHAVVRALARREPYAKLVRDIPFRVGAVVGSPASYAGLLMDAGCKVDAWDPTYLHQLTGKNPVLEWITGTALVPVRERFDDVSWEQFRQELIPLLDDAYPPRSDGTTMFPFRRLFIVAEVGGARRSADVS</sequence>
<comment type="function">
    <text evidence="1">Catalyzes the S-adenosylmethionine monomethyl esterification of trans-aconitate.</text>
</comment>
<comment type="catalytic activity">
    <reaction evidence="1">
        <text>trans-aconitate + S-adenosyl-L-methionine = (E)-3-(methoxycarbonyl)pent-2-enedioate + S-adenosyl-L-homocysteine</text>
        <dbReference type="Rhea" id="RHEA:14969"/>
        <dbReference type="ChEBI" id="CHEBI:15708"/>
        <dbReference type="ChEBI" id="CHEBI:57470"/>
        <dbReference type="ChEBI" id="CHEBI:57856"/>
        <dbReference type="ChEBI" id="CHEBI:59789"/>
        <dbReference type="EC" id="2.1.1.144"/>
    </reaction>
</comment>
<comment type="subcellular location">
    <subcellularLocation>
        <location evidence="1">Cytoplasm</location>
    </subcellularLocation>
</comment>
<comment type="similarity">
    <text evidence="1">Belongs to the methyltransferase superfamily. Tam family.</text>
</comment>
<proteinExistence type="inferred from homology"/>
<keyword id="KW-0963">Cytoplasm</keyword>
<keyword id="KW-0489">Methyltransferase</keyword>
<keyword id="KW-0949">S-adenosyl-L-methionine</keyword>
<keyword id="KW-0808">Transferase</keyword>
<reference key="1">
    <citation type="journal article" date="2007" name="Genome Res.">
        <title>Reductive evolution and niche adaptation inferred from the genome of Mycobacterium ulcerans, the causative agent of Buruli ulcer.</title>
        <authorList>
            <person name="Stinear T.P."/>
            <person name="Seemann T."/>
            <person name="Pidot S."/>
            <person name="Frigui W."/>
            <person name="Reysset G."/>
            <person name="Garnier T."/>
            <person name="Meurice G."/>
            <person name="Simon D."/>
            <person name="Bouchier C."/>
            <person name="Ma L."/>
            <person name="Tichit M."/>
            <person name="Porter J.L."/>
            <person name="Ryan J."/>
            <person name="Johnson P.D.R."/>
            <person name="Davies J.K."/>
            <person name="Jenkin G.A."/>
            <person name="Small P.L.C."/>
            <person name="Jones L.M."/>
            <person name="Tekaia F."/>
            <person name="Laval F."/>
            <person name="Daffe M."/>
            <person name="Parkhill J."/>
            <person name="Cole S.T."/>
        </authorList>
    </citation>
    <scope>NUCLEOTIDE SEQUENCE [LARGE SCALE GENOMIC DNA]</scope>
    <source>
        <strain>Agy99</strain>
    </source>
</reference>
<organism>
    <name type="scientific">Mycobacterium ulcerans (strain Agy99)</name>
    <dbReference type="NCBI Taxonomy" id="362242"/>
    <lineage>
        <taxon>Bacteria</taxon>
        <taxon>Bacillati</taxon>
        <taxon>Actinomycetota</taxon>
        <taxon>Actinomycetes</taxon>
        <taxon>Mycobacteriales</taxon>
        <taxon>Mycobacteriaceae</taxon>
        <taxon>Mycobacterium</taxon>
        <taxon>Mycobacterium ulcerans group</taxon>
    </lineage>
</organism>
<dbReference type="EC" id="2.1.1.144" evidence="1"/>
<dbReference type="EMBL" id="CP000325">
    <property type="protein sequence ID" value="ABL03791.1"/>
    <property type="molecule type" value="Genomic_DNA"/>
</dbReference>
<dbReference type="RefSeq" id="WP_011739413.1">
    <property type="nucleotide sequence ID" value="NC_008611.1"/>
</dbReference>
<dbReference type="SMR" id="A0PN72"/>
<dbReference type="KEGG" id="mul:MUL_1216"/>
<dbReference type="eggNOG" id="COG4106">
    <property type="taxonomic scope" value="Bacteria"/>
</dbReference>
<dbReference type="HOGENOM" id="CLU_037990_5_2_11"/>
<dbReference type="Proteomes" id="UP000000765">
    <property type="component" value="Chromosome"/>
</dbReference>
<dbReference type="GO" id="GO:0005737">
    <property type="term" value="C:cytoplasm"/>
    <property type="evidence" value="ECO:0007669"/>
    <property type="project" value="UniProtKB-SubCell"/>
</dbReference>
<dbReference type="GO" id="GO:0030798">
    <property type="term" value="F:trans-aconitate 2-methyltransferase activity"/>
    <property type="evidence" value="ECO:0007669"/>
    <property type="project" value="UniProtKB-UniRule"/>
</dbReference>
<dbReference type="GO" id="GO:0032259">
    <property type="term" value="P:methylation"/>
    <property type="evidence" value="ECO:0007669"/>
    <property type="project" value="UniProtKB-KW"/>
</dbReference>
<dbReference type="CDD" id="cd02440">
    <property type="entry name" value="AdoMet_MTases"/>
    <property type="match status" value="1"/>
</dbReference>
<dbReference type="Gene3D" id="1.10.150.290">
    <property type="entry name" value="S-adenosyl-L-methionine-dependent methyltransferases"/>
    <property type="match status" value="1"/>
</dbReference>
<dbReference type="Gene3D" id="3.40.50.150">
    <property type="entry name" value="Vaccinia Virus protein VP39"/>
    <property type="match status" value="1"/>
</dbReference>
<dbReference type="HAMAP" id="MF_00560">
    <property type="entry name" value="Tran_acon_Me_trans"/>
    <property type="match status" value="1"/>
</dbReference>
<dbReference type="InterPro" id="IPR041698">
    <property type="entry name" value="Methyltransf_25"/>
</dbReference>
<dbReference type="InterPro" id="IPR029063">
    <property type="entry name" value="SAM-dependent_MTases_sf"/>
</dbReference>
<dbReference type="InterPro" id="IPR023506">
    <property type="entry name" value="Trans-aconitate_MeTrfase"/>
</dbReference>
<dbReference type="InterPro" id="IPR023149">
    <property type="entry name" value="Trans_acon_MeTrfase_C"/>
</dbReference>
<dbReference type="NCBIfam" id="NF010703">
    <property type="entry name" value="PRK14103.1"/>
    <property type="match status" value="1"/>
</dbReference>
<dbReference type="PANTHER" id="PTHR43861:SF1">
    <property type="entry name" value="TRANS-ACONITATE 2-METHYLTRANSFERASE"/>
    <property type="match status" value="1"/>
</dbReference>
<dbReference type="PANTHER" id="PTHR43861">
    <property type="entry name" value="TRANS-ACONITATE 2-METHYLTRANSFERASE-RELATED"/>
    <property type="match status" value="1"/>
</dbReference>
<dbReference type="Pfam" id="PF13649">
    <property type="entry name" value="Methyltransf_25"/>
    <property type="match status" value="1"/>
</dbReference>
<dbReference type="SUPFAM" id="SSF53335">
    <property type="entry name" value="S-adenosyl-L-methionine-dependent methyltransferases"/>
    <property type="match status" value="1"/>
</dbReference>
<protein>
    <recommendedName>
        <fullName evidence="1">Trans-aconitate 2-methyltransferase</fullName>
        <ecNumber evidence="1">2.1.1.144</ecNumber>
    </recommendedName>
</protein>
<name>TAM_MYCUA</name>